<accession>P64546</accession>
<accession>P76571</accession>
<proteinExistence type="predicted"/>
<protein>
    <recommendedName>
        <fullName>Uncharacterized protein YfgG</fullName>
    </recommendedName>
</protein>
<dbReference type="EMBL" id="AE005174">
    <property type="protein sequence ID" value="AAG57615.1"/>
    <property type="molecule type" value="Genomic_DNA"/>
</dbReference>
<dbReference type="EMBL" id="BA000007">
    <property type="protein sequence ID" value="BAB36789.2"/>
    <property type="status" value="ALT_INIT"/>
    <property type="molecule type" value="Genomic_DNA"/>
</dbReference>
<dbReference type="PIR" id="C85894">
    <property type="entry name" value="C85894"/>
</dbReference>
<dbReference type="PIR" id="F91049">
    <property type="entry name" value="F91049"/>
</dbReference>
<dbReference type="RefSeq" id="NP_311393.1">
    <property type="nucleotide sequence ID" value="NC_002695.1"/>
</dbReference>
<dbReference type="RefSeq" id="WP_000076001.1">
    <property type="nucleotide sequence ID" value="NZ_VOAI01000001.1"/>
</dbReference>
<dbReference type="SMR" id="P64546"/>
<dbReference type="STRING" id="155864.Z3768"/>
<dbReference type="GeneID" id="915219"/>
<dbReference type="KEGG" id="ece:Z3768"/>
<dbReference type="KEGG" id="ecs:ECs_3366"/>
<dbReference type="PATRIC" id="fig|386585.9.peg.3517"/>
<dbReference type="eggNOG" id="ENOG503291S">
    <property type="taxonomic scope" value="Bacteria"/>
</dbReference>
<dbReference type="HOGENOM" id="CLU_200567_2_1_6"/>
<dbReference type="OMA" id="RFNRRMT"/>
<dbReference type="Proteomes" id="UP000000558">
    <property type="component" value="Chromosome"/>
</dbReference>
<dbReference type="Proteomes" id="UP000002519">
    <property type="component" value="Chromosome"/>
</dbReference>
<dbReference type="GO" id="GO:0016020">
    <property type="term" value="C:membrane"/>
    <property type="evidence" value="ECO:0007669"/>
    <property type="project" value="UniProtKB-SubCell"/>
</dbReference>
<dbReference type="InterPro" id="IPR022576">
    <property type="entry name" value="YfgG"/>
</dbReference>
<dbReference type="Pfam" id="PF11119">
    <property type="entry name" value="DUF2633"/>
    <property type="match status" value="1"/>
</dbReference>
<sequence>MSQATSMRKRHRFNSRMTRIVLLISFIFFFGRFIYSSVGAWQHHQSKKEAQQSTLSVESPVQR</sequence>
<name>YFGG_ECO57</name>
<feature type="chain" id="PRO_0000169243" description="Uncharacterized protein YfgG">
    <location>
        <begin position="1"/>
        <end position="63"/>
    </location>
</feature>
<feature type="transmembrane region" description="Helical" evidence="1">
    <location>
        <begin position="20"/>
        <end position="40"/>
    </location>
</feature>
<evidence type="ECO:0000255" key="1"/>
<evidence type="ECO:0000305" key="2"/>
<gene>
    <name type="primary">yfgG</name>
    <name type="ordered locus">Z3768</name>
    <name type="ordered locus">ECs3366</name>
</gene>
<keyword id="KW-0472">Membrane</keyword>
<keyword id="KW-1185">Reference proteome</keyword>
<keyword id="KW-0812">Transmembrane</keyword>
<keyword id="KW-1133">Transmembrane helix</keyword>
<comment type="subcellular location">
    <subcellularLocation>
        <location evidence="2">Membrane</location>
        <topology evidence="2">Single-pass membrane protein</topology>
    </subcellularLocation>
</comment>
<comment type="sequence caution" evidence="2">
    <conflict type="erroneous initiation">
        <sequence resource="EMBL-CDS" id="BAB36789"/>
    </conflict>
    <text>Truncated N-terminus.</text>
</comment>
<organism>
    <name type="scientific">Escherichia coli O157:H7</name>
    <dbReference type="NCBI Taxonomy" id="83334"/>
    <lineage>
        <taxon>Bacteria</taxon>
        <taxon>Pseudomonadati</taxon>
        <taxon>Pseudomonadota</taxon>
        <taxon>Gammaproteobacteria</taxon>
        <taxon>Enterobacterales</taxon>
        <taxon>Enterobacteriaceae</taxon>
        <taxon>Escherichia</taxon>
    </lineage>
</organism>
<reference key="1">
    <citation type="journal article" date="2001" name="Nature">
        <title>Genome sequence of enterohaemorrhagic Escherichia coli O157:H7.</title>
        <authorList>
            <person name="Perna N.T."/>
            <person name="Plunkett G. III"/>
            <person name="Burland V."/>
            <person name="Mau B."/>
            <person name="Glasner J.D."/>
            <person name="Rose D.J."/>
            <person name="Mayhew G.F."/>
            <person name="Evans P.S."/>
            <person name="Gregor J."/>
            <person name="Kirkpatrick H.A."/>
            <person name="Posfai G."/>
            <person name="Hackett J."/>
            <person name="Klink S."/>
            <person name="Boutin A."/>
            <person name="Shao Y."/>
            <person name="Miller L."/>
            <person name="Grotbeck E.J."/>
            <person name="Davis N.W."/>
            <person name="Lim A."/>
            <person name="Dimalanta E.T."/>
            <person name="Potamousis K."/>
            <person name="Apodaca J."/>
            <person name="Anantharaman T.S."/>
            <person name="Lin J."/>
            <person name="Yen G."/>
            <person name="Schwartz D.C."/>
            <person name="Welch R.A."/>
            <person name="Blattner F.R."/>
        </authorList>
    </citation>
    <scope>NUCLEOTIDE SEQUENCE [LARGE SCALE GENOMIC DNA]</scope>
    <source>
        <strain>O157:H7 / EDL933 / ATCC 700927 / EHEC</strain>
    </source>
</reference>
<reference key="2">
    <citation type="journal article" date="2001" name="DNA Res.">
        <title>Complete genome sequence of enterohemorrhagic Escherichia coli O157:H7 and genomic comparison with a laboratory strain K-12.</title>
        <authorList>
            <person name="Hayashi T."/>
            <person name="Makino K."/>
            <person name="Ohnishi M."/>
            <person name="Kurokawa K."/>
            <person name="Ishii K."/>
            <person name="Yokoyama K."/>
            <person name="Han C.-G."/>
            <person name="Ohtsubo E."/>
            <person name="Nakayama K."/>
            <person name="Murata T."/>
            <person name="Tanaka M."/>
            <person name="Tobe T."/>
            <person name="Iida T."/>
            <person name="Takami H."/>
            <person name="Honda T."/>
            <person name="Sasakawa C."/>
            <person name="Ogasawara N."/>
            <person name="Yasunaga T."/>
            <person name="Kuhara S."/>
            <person name="Shiba T."/>
            <person name="Hattori M."/>
            <person name="Shinagawa H."/>
        </authorList>
    </citation>
    <scope>NUCLEOTIDE SEQUENCE [LARGE SCALE GENOMIC DNA]</scope>
    <source>
        <strain>O157:H7 / Sakai / RIMD 0509952 / EHEC</strain>
    </source>
</reference>